<reference key="1">
    <citation type="journal article" date="1992" name="Mol. Microbiol.">
        <title>Molecular analysis of the lac operon encoding the binding-protein-dependent lactose transport system and beta-galactosidase in Agrobacterium radiobacter.</title>
        <authorList>
            <person name="Williams S.G."/>
            <person name="Greenwood J.A."/>
            <person name="Jones C.W."/>
        </authorList>
    </citation>
    <scope>NUCLEOTIDE SEQUENCE [GENOMIC DNA]</scope>
    <source>
        <strain>AR50</strain>
    </source>
</reference>
<proteinExistence type="inferred from homology"/>
<keyword id="KW-0326">Glycosidase</keyword>
<keyword id="KW-0378">Hydrolase</keyword>
<sequence length="138" mass="15016">MRIIENFNEFGEWGMTWRDGELVGFINGEEVVRRHLPADPLPTTLEIAADDTELRAGEKDTVRVILRALDQGGNVLSFFDDPVEVSLQGPGRIVGPSLLSFKGGAVGVYVEAGNEAGHLTLSATCRPFGTQRITFNVT</sequence>
<comment type="catalytic activity">
    <reaction>
        <text>Hydrolysis of terminal non-reducing beta-D-galactose residues in beta-D-galactosides.</text>
        <dbReference type="EC" id="3.2.1.23"/>
    </reaction>
</comment>
<comment type="similarity">
    <text evidence="1">Belongs to the glycosyl hydrolase 2 family.</text>
</comment>
<protein>
    <recommendedName>
        <fullName>Beta-galactosidase</fullName>
        <shortName>Beta-gal</shortName>
        <ecNumber>3.2.1.23</ecNumber>
    </recommendedName>
    <alternativeName>
        <fullName>Lactase</fullName>
    </alternativeName>
</protein>
<accession>P30812</accession>
<evidence type="ECO:0000305" key="1"/>
<name>BGAL_RHIRD</name>
<organism>
    <name type="scientific">Rhizobium radiobacter</name>
    <name type="common">Agrobacterium tumefaciens</name>
    <name type="synonym">Agrobacterium radiobacter</name>
    <dbReference type="NCBI Taxonomy" id="358"/>
    <lineage>
        <taxon>Bacteria</taxon>
        <taxon>Pseudomonadati</taxon>
        <taxon>Pseudomonadota</taxon>
        <taxon>Alphaproteobacteria</taxon>
        <taxon>Hyphomicrobiales</taxon>
        <taxon>Rhizobiaceae</taxon>
        <taxon>Rhizobium/Agrobacterium group</taxon>
        <taxon>Agrobacterium</taxon>
        <taxon>Agrobacterium tumefaciens complex</taxon>
    </lineage>
</organism>
<gene>
    <name type="primary">lacZ</name>
</gene>
<feature type="chain" id="PRO_0000057655" description="Beta-galactosidase">
    <location>
        <begin position="1"/>
        <end position="138" status="greater than"/>
    </location>
</feature>
<feature type="non-terminal residue">
    <location>
        <position position="138"/>
    </location>
</feature>
<dbReference type="EC" id="3.2.1.23"/>
<dbReference type="EMBL" id="X66596">
    <property type="status" value="NOT_ANNOTATED_CDS"/>
    <property type="molecule type" value="Genomic_DNA"/>
</dbReference>
<dbReference type="PIR" id="S34735">
    <property type="entry name" value="S34735"/>
</dbReference>
<dbReference type="SMR" id="P30812"/>
<dbReference type="CAZy" id="GH2">
    <property type="family name" value="Glycoside Hydrolase Family 2"/>
</dbReference>
<dbReference type="GO" id="GO:0004565">
    <property type="term" value="F:beta-galactosidase activity"/>
    <property type="evidence" value="ECO:0007669"/>
    <property type="project" value="UniProtKB-EC"/>
</dbReference>
<dbReference type="Gene3D" id="2.60.40.10">
    <property type="entry name" value="Immunoglobulins"/>
    <property type="match status" value="1"/>
</dbReference>
<dbReference type="InterPro" id="IPR040605">
    <property type="entry name" value="Glyco_hydro2_dom5"/>
</dbReference>
<dbReference type="InterPro" id="IPR013783">
    <property type="entry name" value="Ig-like_fold"/>
</dbReference>
<dbReference type="Pfam" id="PF18565">
    <property type="entry name" value="Glyco_hydro2_C5"/>
    <property type="match status" value="1"/>
</dbReference>